<feature type="signal peptide" evidence="1">
    <location>
        <begin position="1"/>
        <end position="23"/>
    </location>
</feature>
<feature type="chain" id="PRO_0000019288" description="Mucin-15">
    <location>
        <begin position="24"/>
        <end position="334"/>
    </location>
</feature>
<feature type="topological domain" description="Extracellular" evidence="2">
    <location>
        <begin position="24"/>
        <end position="236"/>
    </location>
</feature>
<feature type="transmembrane region" description="Helical" evidence="2">
    <location>
        <begin position="237"/>
        <end position="257"/>
    </location>
</feature>
<feature type="topological domain" description="Cytoplasmic" evidence="2">
    <location>
        <begin position="258"/>
        <end position="334"/>
    </location>
</feature>
<feature type="region of interest" description="Disordered" evidence="3">
    <location>
        <begin position="64"/>
        <end position="104"/>
    </location>
</feature>
<feature type="region of interest" description="Disordered" evidence="3">
    <location>
        <begin position="304"/>
        <end position="334"/>
    </location>
</feature>
<feature type="compositionally biased region" description="Polar residues" evidence="3">
    <location>
        <begin position="77"/>
        <end position="94"/>
    </location>
</feature>
<feature type="glycosylation site" description="N-linked (GlcNAc...) asparagine" evidence="2">
    <location>
        <position position="30"/>
    </location>
</feature>
<feature type="glycosylation site" description="N-linked (GlcNAc...) asparagine" evidence="2">
    <location>
        <position position="61"/>
    </location>
</feature>
<feature type="glycosylation site" description="N-linked (GlcNAc...) asparagine" evidence="2">
    <location>
        <position position="79"/>
    </location>
</feature>
<feature type="glycosylation site" description="N-linked (GlcNAc...) asparagine" evidence="2">
    <location>
        <position position="90"/>
    </location>
</feature>
<feature type="glycosylation site" description="N-linked (GlcNAc...) asparagine" evidence="2">
    <location>
        <position position="148"/>
    </location>
</feature>
<feature type="glycosylation site" description="N-linked (GlcNAc...) asparagine" evidence="2">
    <location>
        <position position="155"/>
    </location>
</feature>
<feature type="glycosylation site" description="N-linked (GlcNAc...) asparagine" evidence="2">
    <location>
        <position position="163"/>
    </location>
</feature>
<feature type="glycosylation site" description="N-linked (GlcNAc...) asparagine" evidence="2">
    <location>
        <position position="218"/>
    </location>
</feature>
<feature type="glycosylation site" description="N-linked (GlcNAc...) asparagine" evidence="2">
    <location>
        <position position="225"/>
    </location>
</feature>
<feature type="splice variant" id="VSP_010825" description="In isoform 2." evidence="6">
    <location>
        <begin position="232"/>
        <end position="281"/>
    </location>
</feature>
<feature type="sequence variant" id="VAR_050452" description="In dbSNP:rs293979.">
    <original>S</original>
    <variation>W</variation>
    <location>
        <position position="19"/>
    </location>
</feature>
<feature type="sequence variant" id="VAR_019376" description="In dbSNP:rs2292290.">
    <original>I</original>
    <variation>T</variation>
    <location>
        <position position="184"/>
    </location>
</feature>
<feature type="sequence variant" id="VAR_019377" description="In dbSNP:rs15783." evidence="4 5">
    <original>T</original>
    <variation>I</variation>
    <location>
        <position position="202"/>
    </location>
</feature>
<feature type="sequence conflict" description="In Ref. 1; CAD45555." evidence="7" ref="1">
    <original>A</original>
    <variation>T</variation>
    <location>
        <position position="143"/>
    </location>
</feature>
<protein>
    <recommendedName>
        <fullName>Mucin-15</fullName>
        <shortName>MUC-15</shortName>
    </recommendedName>
</protein>
<accession>Q8N387</accession>
<accession>B3KY00</accession>
<accession>E9PII6</accession>
<accession>F8W945</accession>
<accession>Q6UWS3</accession>
<accession>Q8IXI8</accession>
<accession>Q8WW41</accession>
<organism>
    <name type="scientific">Homo sapiens</name>
    <name type="common">Human</name>
    <dbReference type="NCBI Taxonomy" id="9606"/>
    <lineage>
        <taxon>Eukaryota</taxon>
        <taxon>Metazoa</taxon>
        <taxon>Chordata</taxon>
        <taxon>Craniata</taxon>
        <taxon>Vertebrata</taxon>
        <taxon>Euteleostomi</taxon>
        <taxon>Mammalia</taxon>
        <taxon>Eutheria</taxon>
        <taxon>Euarchontoglires</taxon>
        <taxon>Primates</taxon>
        <taxon>Haplorrhini</taxon>
        <taxon>Catarrhini</taxon>
        <taxon>Hominidae</taxon>
        <taxon>Homo</taxon>
    </lineage>
</organism>
<gene>
    <name type="primary">MUC15</name>
    <name type="ORF">UNQ750/PRO1481</name>
</gene>
<comment type="function">
    <text>May play a role in the cell adhesion to the extracellular matrix.</text>
</comment>
<comment type="interaction">
    <interactant intactId="EBI-17937277">
        <id>Q8N387</id>
    </interactant>
    <interactant intactId="EBI-1211297">
        <id>P07766</id>
        <label>CD3E</label>
    </interactant>
    <organismsDiffer>false</organismsDiffer>
    <experiments>3</experiments>
</comment>
<comment type="interaction">
    <interactant intactId="EBI-17937277">
        <id>Q8N387</id>
    </interactant>
    <interactant intactId="EBI-2835940">
        <id>P34972</id>
        <label>CNR2</label>
    </interactant>
    <organismsDiffer>false</organismsDiffer>
    <experiments>3</experiments>
</comment>
<comment type="interaction">
    <interactant intactId="EBI-17937277">
        <id>Q8N387</id>
    </interactant>
    <interactant intactId="EBI-21591415">
        <id>P13473-2</id>
        <label>LAMP2</label>
    </interactant>
    <organismsDiffer>false</organismsDiffer>
    <experiments>3</experiments>
</comment>
<comment type="interaction">
    <interactant intactId="EBI-17937277">
        <id>Q8N387</id>
    </interactant>
    <interactant intactId="EBI-2623095">
        <id>Q9Y371</id>
        <label>SH3GLB1</label>
    </interactant>
    <organismsDiffer>false</organismsDiffer>
    <experiments>3</experiments>
</comment>
<comment type="subcellular location">
    <molecule>Isoform 1</molecule>
    <subcellularLocation>
        <location evidence="7">Cell membrane</location>
        <topology evidence="7">Single-pass type I membrane protein</topology>
    </subcellularLocation>
</comment>
<comment type="subcellular location">
    <molecule>Isoform 2</molecule>
    <subcellularLocation>
        <location evidence="7">Secreted</location>
    </subcellularLocation>
</comment>
<comment type="alternative products">
    <event type="alternative splicing"/>
    <isoform>
        <id>Q8N387-1</id>
        <name>1</name>
        <name>MUC15</name>
        <sequence type="displayed"/>
    </isoform>
    <isoform>
        <id>Q8N387-2</id>
        <name>2</name>
        <name>MUC15/S</name>
        <sequence type="described" ref="VSP_010825"/>
    </isoform>
</comment>
<comment type="tissue specificity">
    <text evidence="4">Expressed in spleen, thymus, prostate, testis, ovary, small intestine, colon, peripheral blood leukocyte, bone marrow, lymph node and lung.</text>
</comment>
<comment type="PTM">
    <text evidence="1">Highly glycosylated (N- and O-linked carbohydrates).</text>
</comment>
<comment type="sequence caution" evidence="7">
    <conflict type="erroneous termination">
        <sequence resource="EMBL-CDS" id="AAH20912"/>
    </conflict>
    <text>Extended C-terminus.</text>
</comment>
<comment type="online information" name="Mucin database">
    <link uri="http://www.medkem.gu.se/mucinbiology/databases/"/>
</comment>
<name>MUC15_HUMAN</name>
<proteinExistence type="evidence at protein level"/>
<sequence>MLALAKILLISTLFYSLLSGSHGKENQDINTTQNIAEVFKTMENKPISLESEANLNSDKENITTSNLKASHSPPLNLPNNSHGITDFSSNSSAEHSLGSLKPTSTISTSPPLIHSFVSKVPWNAPIADEDLLPISAHPNATPALSSENFTWSLVNDTVKTPDNSSITVSILSSEPTSPSVTPLIVEPSGWLTTNSDSFTGFTPYQEKTTLQPTLKFTNNSKLFPNTSDPQKENRNTGIVFGAILGAILGVSLLTLVGYLLCGKRKTDSFSHRRLYDDRNEPVLRLDNAPEPYDVSFGNSSYYNPTLNDSAMPESEENARDGIPMDDIPPLRTSV</sequence>
<keyword id="KW-0025">Alternative splicing</keyword>
<keyword id="KW-1003">Cell membrane</keyword>
<keyword id="KW-0325">Glycoprotein</keyword>
<keyword id="KW-0472">Membrane</keyword>
<keyword id="KW-1267">Proteomics identification</keyword>
<keyword id="KW-1185">Reference proteome</keyword>
<keyword id="KW-0964">Secreted</keyword>
<keyword id="KW-0732">Signal</keyword>
<keyword id="KW-0812">Transmembrane</keyword>
<keyword id="KW-1133">Transmembrane helix</keyword>
<evidence type="ECO:0000250" key="1"/>
<evidence type="ECO:0000255" key="2"/>
<evidence type="ECO:0000256" key="3">
    <source>
        <dbReference type="SAM" id="MobiDB-lite"/>
    </source>
</evidence>
<evidence type="ECO:0000269" key="4">
    <source>
    </source>
</evidence>
<evidence type="ECO:0000269" key="5">
    <source>
    </source>
</evidence>
<evidence type="ECO:0000303" key="6">
    <source>
    </source>
</evidence>
<evidence type="ECO:0000305" key="7"/>
<reference key="1">
    <citation type="journal article" date="2002" name="Eur. J. Biochem.">
        <title>Isolation and characterization of MUC15, a novel cell membrane associated mucin.</title>
        <authorList>
            <person name="Pallesen L.T."/>
            <person name="Berglund L."/>
            <person name="Rasmussen L.K."/>
            <person name="Petersen T.E."/>
            <person name="Rasmussen J.T."/>
        </authorList>
    </citation>
    <scope>NUCLEOTIDE SEQUENCE [MRNA] (ISOFORMS 1 AND 2)</scope>
    <scope>TISSUE SPECIFICITY</scope>
    <scope>VARIANT ILE-202</scope>
    <source>
        <tissue>Lactating mammary gland</tissue>
    </source>
</reference>
<reference key="2">
    <citation type="journal article" date="2003" name="Genome Res.">
        <title>The secreted protein discovery initiative (SPDI), a large-scale effort to identify novel human secreted and transmembrane proteins: a bioinformatics assessment.</title>
        <authorList>
            <person name="Clark H.F."/>
            <person name="Gurney A.L."/>
            <person name="Abaya E."/>
            <person name="Baker K."/>
            <person name="Baldwin D.T."/>
            <person name="Brush J."/>
            <person name="Chen J."/>
            <person name="Chow B."/>
            <person name="Chui C."/>
            <person name="Crowley C."/>
            <person name="Currell B."/>
            <person name="Deuel B."/>
            <person name="Dowd P."/>
            <person name="Eaton D."/>
            <person name="Foster J.S."/>
            <person name="Grimaldi C."/>
            <person name="Gu Q."/>
            <person name="Hass P.E."/>
            <person name="Heldens S."/>
            <person name="Huang A."/>
            <person name="Kim H.S."/>
            <person name="Klimowski L."/>
            <person name="Jin Y."/>
            <person name="Johnson S."/>
            <person name="Lee J."/>
            <person name="Lewis L."/>
            <person name="Liao D."/>
            <person name="Mark M.R."/>
            <person name="Robbie E."/>
            <person name="Sanchez C."/>
            <person name="Schoenfeld J."/>
            <person name="Seshagiri S."/>
            <person name="Simmons L."/>
            <person name="Singh J."/>
            <person name="Smith V."/>
            <person name="Stinson J."/>
            <person name="Vagts A."/>
            <person name="Vandlen R.L."/>
            <person name="Watanabe C."/>
            <person name="Wieand D."/>
            <person name="Woods K."/>
            <person name="Xie M.-H."/>
            <person name="Yansura D.G."/>
            <person name="Yi S."/>
            <person name="Yu G."/>
            <person name="Yuan J."/>
            <person name="Zhang M."/>
            <person name="Zhang Z."/>
            <person name="Goddard A.D."/>
            <person name="Wood W.I."/>
            <person name="Godowski P.J."/>
            <person name="Gray A.M."/>
        </authorList>
    </citation>
    <scope>NUCLEOTIDE SEQUENCE [LARGE SCALE MRNA] (ISOFORM 1)</scope>
</reference>
<reference key="3">
    <citation type="journal article" date="2004" name="Nat. Genet.">
        <title>Complete sequencing and characterization of 21,243 full-length human cDNAs.</title>
        <authorList>
            <person name="Ota T."/>
            <person name="Suzuki Y."/>
            <person name="Nishikawa T."/>
            <person name="Otsuki T."/>
            <person name="Sugiyama T."/>
            <person name="Irie R."/>
            <person name="Wakamatsu A."/>
            <person name="Hayashi K."/>
            <person name="Sato H."/>
            <person name="Nagai K."/>
            <person name="Kimura K."/>
            <person name="Makita H."/>
            <person name="Sekine M."/>
            <person name="Obayashi M."/>
            <person name="Nishi T."/>
            <person name="Shibahara T."/>
            <person name="Tanaka T."/>
            <person name="Ishii S."/>
            <person name="Yamamoto J."/>
            <person name="Saito K."/>
            <person name="Kawai Y."/>
            <person name="Isono Y."/>
            <person name="Nakamura Y."/>
            <person name="Nagahari K."/>
            <person name="Murakami K."/>
            <person name="Yasuda T."/>
            <person name="Iwayanagi T."/>
            <person name="Wagatsuma M."/>
            <person name="Shiratori A."/>
            <person name="Sudo H."/>
            <person name="Hosoiri T."/>
            <person name="Kaku Y."/>
            <person name="Kodaira H."/>
            <person name="Kondo H."/>
            <person name="Sugawara M."/>
            <person name="Takahashi M."/>
            <person name="Kanda K."/>
            <person name="Yokoi T."/>
            <person name="Furuya T."/>
            <person name="Kikkawa E."/>
            <person name="Omura Y."/>
            <person name="Abe K."/>
            <person name="Kamihara K."/>
            <person name="Katsuta N."/>
            <person name="Sato K."/>
            <person name="Tanikawa M."/>
            <person name="Yamazaki M."/>
            <person name="Ninomiya K."/>
            <person name="Ishibashi T."/>
            <person name="Yamashita H."/>
            <person name="Murakawa K."/>
            <person name="Fujimori K."/>
            <person name="Tanai H."/>
            <person name="Kimata M."/>
            <person name="Watanabe M."/>
            <person name="Hiraoka S."/>
            <person name="Chiba Y."/>
            <person name="Ishida S."/>
            <person name="Ono Y."/>
            <person name="Takiguchi S."/>
            <person name="Watanabe S."/>
            <person name="Yosida M."/>
            <person name="Hotuta T."/>
            <person name="Kusano J."/>
            <person name="Kanehori K."/>
            <person name="Takahashi-Fujii A."/>
            <person name="Hara H."/>
            <person name="Tanase T.-O."/>
            <person name="Nomura Y."/>
            <person name="Togiya S."/>
            <person name="Komai F."/>
            <person name="Hara R."/>
            <person name="Takeuchi K."/>
            <person name="Arita M."/>
            <person name="Imose N."/>
            <person name="Musashino K."/>
            <person name="Yuuki H."/>
            <person name="Oshima A."/>
            <person name="Sasaki N."/>
            <person name="Aotsuka S."/>
            <person name="Yoshikawa Y."/>
            <person name="Matsunawa H."/>
            <person name="Ichihara T."/>
            <person name="Shiohata N."/>
            <person name="Sano S."/>
            <person name="Moriya S."/>
            <person name="Momiyama H."/>
            <person name="Satoh N."/>
            <person name="Takami S."/>
            <person name="Terashima Y."/>
            <person name="Suzuki O."/>
            <person name="Nakagawa S."/>
            <person name="Senoh A."/>
            <person name="Mizoguchi H."/>
            <person name="Goto Y."/>
            <person name="Shimizu F."/>
            <person name="Wakebe H."/>
            <person name="Hishigaki H."/>
            <person name="Watanabe T."/>
            <person name="Sugiyama A."/>
            <person name="Takemoto M."/>
            <person name="Kawakami B."/>
            <person name="Yamazaki M."/>
            <person name="Watanabe K."/>
            <person name="Kumagai A."/>
            <person name="Itakura S."/>
            <person name="Fukuzumi Y."/>
            <person name="Fujimori Y."/>
            <person name="Komiyama M."/>
            <person name="Tashiro H."/>
            <person name="Tanigami A."/>
            <person name="Fujiwara T."/>
            <person name="Ono T."/>
            <person name="Yamada K."/>
            <person name="Fujii Y."/>
            <person name="Ozaki K."/>
            <person name="Hirao M."/>
            <person name="Ohmori Y."/>
            <person name="Kawabata A."/>
            <person name="Hikiji T."/>
            <person name="Kobatake N."/>
            <person name="Inagaki H."/>
            <person name="Ikema Y."/>
            <person name="Okamoto S."/>
            <person name="Okitani R."/>
            <person name="Kawakami T."/>
            <person name="Noguchi S."/>
            <person name="Itoh T."/>
            <person name="Shigeta K."/>
            <person name="Senba T."/>
            <person name="Matsumura K."/>
            <person name="Nakajima Y."/>
            <person name="Mizuno T."/>
            <person name="Morinaga M."/>
            <person name="Sasaki M."/>
            <person name="Togashi T."/>
            <person name="Oyama M."/>
            <person name="Hata H."/>
            <person name="Watanabe M."/>
            <person name="Komatsu T."/>
            <person name="Mizushima-Sugano J."/>
            <person name="Satoh T."/>
            <person name="Shirai Y."/>
            <person name="Takahashi Y."/>
            <person name="Nakagawa K."/>
            <person name="Okumura K."/>
            <person name="Nagase T."/>
            <person name="Nomura N."/>
            <person name="Kikuchi H."/>
            <person name="Masuho Y."/>
            <person name="Yamashita R."/>
            <person name="Nakai K."/>
            <person name="Yada T."/>
            <person name="Nakamura Y."/>
            <person name="Ohara O."/>
            <person name="Isogai T."/>
            <person name="Sugano S."/>
        </authorList>
    </citation>
    <scope>NUCLEOTIDE SEQUENCE [LARGE SCALE MRNA] (ISOFORM 1)</scope>
    <source>
        <tissue>Thymus</tissue>
    </source>
</reference>
<reference key="4">
    <citation type="journal article" date="2006" name="Nature">
        <title>Human chromosome 11 DNA sequence and analysis including novel gene identification.</title>
        <authorList>
            <person name="Taylor T.D."/>
            <person name="Noguchi H."/>
            <person name="Totoki Y."/>
            <person name="Toyoda A."/>
            <person name="Kuroki Y."/>
            <person name="Dewar K."/>
            <person name="Lloyd C."/>
            <person name="Itoh T."/>
            <person name="Takeda T."/>
            <person name="Kim D.-W."/>
            <person name="She X."/>
            <person name="Barlow K.F."/>
            <person name="Bloom T."/>
            <person name="Bruford E."/>
            <person name="Chang J.L."/>
            <person name="Cuomo C.A."/>
            <person name="Eichler E."/>
            <person name="FitzGerald M.G."/>
            <person name="Jaffe D.B."/>
            <person name="LaButti K."/>
            <person name="Nicol R."/>
            <person name="Park H.-S."/>
            <person name="Seaman C."/>
            <person name="Sougnez C."/>
            <person name="Yang X."/>
            <person name="Zimmer A.R."/>
            <person name="Zody M.C."/>
            <person name="Birren B.W."/>
            <person name="Nusbaum C."/>
            <person name="Fujiyama A."/>
            <person name="Hattori M."/>
            <person name="Rogers J."/>
            <person name="Lander E.S."/>
            <person name="Sakaki Y."/>
        </authorList>
    </citation>
    <scope>NUCLEOTIDE SEQUENCE [LARGE SCALE GENOMIC DNA]</scope>
</reference>
<reference key="5">
    <citation type="journal article" date="2004" name="Genome Res.">
        <title>The status, quality, and expansion of the NIH full-length cDNA project: the Mammalian Gene Collection (MGC).</title>
        <authorList>
            <consortium name="The MGC Project Team"/>
        </authorList>
    </citation>
    <scope>NUCLEOTIDE SEQUENCE [LARGE SCALE MRNA] (ISOFORM 1)</scope>
    <scope>VARIANT ILE-202</scope>
    <source>
        <tissue>Placenta</tissue>
    </source>
</reference>
<dbReference type="EMBL" id="AJ417818">
    <property type="protein sequence ID" value="CAD10624.1"/>
    <property type="molecule type" value="mRNA"/>
</dbReference>
<dbReference type="EMBL" id="AJ507429">
    <property type="protein sequence ID" value="CAD45555.1"/>
    <property type="molecule type" value="mRNA"/>
</dbReference>
<dbReference type="EMBL" id="AY358668">
    <property type="protein sequence ID" value="AAQ89031.1"/>
    <property type="molecule type" value="mRNA"/>
</dbReference>
<dbReference type="EMBL" id="AK128337">
    <property type="protein sequence ID" value="BAG54662.1"/>
    <property type="molecule type" value="mRNA"/>
</dbReference>
<dbReference type="EMBL" id="AC036114">
    <property type="status" value="NOT_ANNOTATED_CDS"/>
    <property type="molecule type" value="Genomic_DNA"/>
</dbReference>
<dbReference type="EMBL" id="BC020912">
    <property type="protein sequence ID" value="AAH20912.2"/>
    <property type="status" value="ALT_SEQ"/>
    <property type="molecule type" value="mRNA"/>
</dbReference>
<dbReference type="EMBL" id="BC058007">
    <property type="protein sequence ID" value="AAH58007.1"/>
    <property type="molecule type" value="mRNA"/>
</dbReference>
<dbReference type="CCDS" id="CCDS7859.1">
    <molecule id="Q8N387-1"/>
</dbReference>
<dbReference type="RefSeq" id="NP_001128563.1">
    <property type="nucleotide sequence ID" value="NM_001135091.1"/>
</dbReference>
<dbReference type="RefSeq" id="NP_001128564.1">
    <property type="nucleotide sequence ID" value="NM_001135092.1"/>
</dbReference>
<dbReference type="RefSeq" id="NP_663625.2">
    <molecule id="Q8N387-1"/>
    <property type="nucleotide sequence ID" value="NM_145650.3"/>
</dbReference>
<dbReference type="BioGRID" id="126813">
    <property type="interactions" value="5"/>
</dbReference>
<dbReference type="FunCoup" id="Q8N387">
    <property type="interactions" value="52"/>
</dbReference>
<dbReference type="IntAct" id="Q8N387">
    <property type="interactions" value="7"/>
</dbReference>
<dbReference type="STRING" id="9606.ENSP00000431983"/>
<dbReference type="GlyCosmos" id="Q8N387">
    <property type="glycosylation" value="9 sites, No reported glycans"/>
</dbReference>
<dbReference type="GlyGen" id="Q8N387">
    <property type="glycosylation" value="10 sites"/>
</dbReference>
<dbReference type="iPTMnet" id="Q8N387"/>
<dbReference type="PhosphoSitePlus" id="Q8N387"/>
<dbReference type="BioMuta" id="MUC15"/>
<dbReference type="DMDM" id="84028223"/>
<dbReference type="MassIVE" id="Q8N387"/>
<dbReference type="PaxDb" id="9606-ENSP00000416753"/>
<dbReference type="PeptideAtlas" id="Q8N387"/>
<dbReference type="ProteomicsDB" id="20820"/>
<dbReference type="ProteomicsDB" id="30258"/>
<dbReference type="ProteomicsDB" id="71777">
    <molecule id="Q8N387-1"/>
</dbReference>
<dbReference type="ProteomicsDB" id="71778">
    <molecule id="Q8N387-2"/>
</dbReference>
<dbReference type="Antibodypedia" id="12684">
    <property type="antibodies" value="140 antibodies from 28 providers"/>
</dbReference>
<dbReference type="DNASU" id="143662"/>
<dbReference type="Ensembl" id="ENST00000455601.6">
    <molecule id="Q8N387-1"/>
    <property type="protein sequence ID" value="ENSP00000397339.2"/>
    <property type="gene ID" value="ENSG00000169550.14"/>
</dbReference>
<dbReference type="GeneID" id="143662"/>
<dbReference type="KEGG" id="hsa:143662"/>
<dbReference type="UCSC" id="uc001mqx.4">
    <molecule id="Q8N387-1"/>
    <property type="organism name" value="human"/>
</dbReference>
<dbReference type="AGR" id="HGNC:14956"/>
<dbReference type="CTD" id="143662"/>
<dbReference type="DisGeNET" id="143662"/>
<dbReference type="GeneCards" id="MUC15"/>
<dbReference type="HGNC" id="HGNC:14956">
    <property type="gene designation" value="MUC15"/>
</dbReference>
<dbReference type="HPA" id="ENSG00000169550">
    <property type="expression patterns" value="Tissue enriched (epididymis)"/>
</dbReference>
<dbReference type="MIM" id="608566">
    <property type="type" value="gene"/>
</dbReference>
<dbReference type="neXtProt" id="NX_Q8N387"/>
<dbReference type="OpenTargets" id="ENSG00000169550"/>
<dbReference type="PharmGKB" id="PA31313"/>
<dbReference type="VEuPathDB" id="HostDB:ENSG00000169550"/>
<dbReference type="eggNOG" id="ENOG502S7P0">
    <property type="taxonomic scope" value="Eukaryota"/>
</dbReference>
<dbReference type="GeneTree" id="ENSGT00390000001698"/>
<dbReference type="HOGENOM" id="CLU_054055_0_0_1"/>
<dbReference type="InParanoid" id="Q8N387"/>
<dbReference type="OMA" id="PDEWLTT"/>
<dbReference type="OrthoDB" id="9950822at2759"/>
<dbReference type="PAN-GO" id="Q8N387">
    <property type="GO annotations" value="0 GO annotations based on evolutionary models"/>
</dbReference>
<dbReference type="PhylomeDB" id="Q8N387"/>
<dbReference type="TreeFam" id="TF338656"/>
<dbReference type="PathwayCommons" id="Q8N387"/>
<dbReference type="Reactome" id="R-HSA-5083625">
    <property type="pathway name" value="Defective GALNT3 causes HFTC"/>
</dbReference>
<dbReference type="Reactome" id="R-HSA-5083632">
    <property type="pathway name" value="Defective C1GALT1C1 causes TNPS"/>
</dbReference>
<dbReference type="Reactome" id="R-HSA-5083636">
    <property type="pathway name" value="Defective GALNT12 causes CRCS1"/>
</dbReference>
<dbReference type="Reactome" id="R-HSA-5621480">
    <property type="pathway name" value="Dectin-2 family"/>
</dbReference>
<dbReference type="Reactome" id="R-HSA-913709">
    <property type="pathway name" value="O-linked glycosylation of mucins"/>
</dbReference>
<dbReference type="Reactome" id="R-HSA-977068">
    <property type="pathway name" value="Termination of O-glycan biosynthesis"/>
</dbReference>
<dbReference type="SignaLink" id="Q8N387"/>
<dbReference type="BioGRID-ORCS" id="143662">
    <property type="hits" value="9 hits in 1142 CRISPR screens"/>
</dbReference>
<dbReference type="ChiTaRS" id="MUC15">
    <property type="organism name" value="human"/>
</dbReference>
<dbReference type="GenomeRNAi" id="143662"/>
<dbReference type="Pharos" id="Q8N387">
    <property type="development level" value="Tbio"/>
</dbReference>
<dbReference type="PRO" id="PR:Q8N387"/>
<dbReference type="Proteomes" id="UP000005640">
    <property type="component" value="Chromosome 11"/>
</dbReference>
<dbReference type="RNAct" id="Q8N387">
    <property type="molecule type" value="protein"/>
</dbReference>
<dbReference type="Bgee" id="ENSG00000169550">
    <property type="expression patterns" value="Expressed in corpus epididymis and 102 other cell types or tissues"/>
</dbReference>
<dbReference type="ExpressionAtlas" id="Q8N387">
    <property type="expression patterns" value="baseline and differential"/>
</dbReference>
<dbReference type="GO" id="GO:0005576">
    <property type="term" value="C:extracellular region"/>
    <property type="evidence" value="ECO:0007669"/>
    <property type="project" value="UniProtKB-SubCell"/>
</dbReference>
<dbReference type="GO" id="GO:0005796">
    <property type="term" value="C:Golgi lumen"/>
    <property type="evidence" value="ECO:0000304"/>
    <property type="project" value="Reactome"/>
</dbReference>
<dbReference type="GO" id="GO:0005886">
    <property type="term" value="C:plasma membrane"/>
    <property type="evidence" value="ECO:0000304"/>
    <property type="project" value="Reactome"/>
</dbReference>
<dbReference type="InterPro" id="IPR031371">
    <property type="entry name" value="Mucin-15"/>
</dbReference>
<dbReference type="PANTHER" id="PTHR45427">
    <property type="entry name" value="MUCIN-15"/>
    <property type="match status" value="1"/>
</dbReference>
<dbReference type="PANTHER" id="PTHR45427:SF1">
    <property type="entry name" value="MUCIN-15"/>
    <property type="match status" value="1"/>
</dbReference>
<dbReference type="Pfam" id="PF15672">
    <property type="entry name" value="Mucin15"/>
    <property type="match status" value="1"/>
</dbReference>